<dbReference type="EC" id="3.6.5.-" evidence="1"/>
<dbReference type="EMBL" id="CP001127">
    <property type="protein sequence ID" value="ACF92737.1"/>
    <property type="molecule type" value="Genomic_DNA"/>
</dbReference>
<dbReference type="SMR" id="B4TWF3"/>
<dbReference type="KEGG" id="sew:SeSA_A3493"/>
<dbReference type="HOGENOM" id="CLU_011747_2_0_6"/>
<dbReference type="Proteomes" id="UP000001865">
    <property type="component" value="Chromosome"/>
</dbReference>
<dbReference type="GO" id="GO:0005737">
    <property type="term" value="C:cytoplasm"/>
    <property type="evidence" value="ECO:0007669"/>
    <property type="project" value="UniProtKB-SubCell"/>
</dbReference>
<dbReference type="GO" id="GO:0005525">
    <property type="term" value="F:GTP binding"/>
    <property type="evidence" value="ECO:0007669"/>
    <property type="project" value="UniProtKB-UniRule"/>
</dbReference>
<dbReference type="GO" id="GO:0003924">
    <property type="term" value="F:GTPase activity"/>
    <property type="evidence" value="ECO:0007669"/>
    <property type="project" value="UniProtKB-UniRule"/>
</dbReference>
<dbReference type="GO" id="GO:0000287">
    <property type="term" value="F:magnesium ion binding"/>
    <property type="evidence" value="ECO:0007669"/>
    <property type="project" value="InterPro"/>
</dbReference>
<dbReference type="GO" id="GO:0042254">
    <property type="term" value="P:ribosome biogenesis"/>
    <property type="evidence" value="ECO:0007669"/>
    <property type="project" value="UniProtKB-UniRule"/>
</dbReference>
<dbReference type="CDD" id="cd01898">
    <property type="entry name" value="Obg"/>
    <property type="match status" value="1"/>
</dbReference>
<dbReference type="FunFam" id="2.70.210.12:FF:000001">
    <property type="entry name" value="GTPase Obg"/>
    <property type="match status" value="1"/>
</dbReference>
<dbReference type="FunFam" id="3.40.50.300:FF:000185">
    <property type="entry name" value="GTPase Obg"/>
    <property type="match status" value="1"/>
</dbReference>
<dbReference type="Gene3D" id="2.70.210.12">
    <property type="entry name" value="GTP1/OBG domain"/>
    <property type="match status" value="1"/>
</dbReference>
<dbReference type="Gene3D" id="3.40.50.300">
    <property type="entry name" value="P-loop containing nucleotide triphosphate hydrolases"/>
    <property type="match status" value="1"/>
</dbReference>
<dbReference type="HAMAP" id="MF_01454">
    <property type="entry name" value="GTPase_Obg"/>
    <property type="match status" value="1"/>
</dbReference>
<dbReference type="InterPro" id="IPR031167">
    <property type="entry name" value="G_OBG"/>
</dbReference>
<dbReference type="InterPro" id="IPR006073">
    <property type="entry name" value="GTP-bd"/>
</dbReference>
<dbReference type="InterPro" id="IPR014100">
    <property type="entry name" value="GTP-bd_Obg/CgtA"/>
</dbReference>
<dbReference type="InterPro" id="IPR006074">
    <property type="entry name" value="GTP1-OBG_CS"/>
</dbReference>
<dbReference type="InterPro" id="IPR006169">
    <property type="entry name" value="GTP1_OBG_dom"/>
</dbReference>
<dbReference type="InterPro" id="IPR036726">
    <property type="entry name" value="GTP1_OBG_dom_sf"/>
</dbReference>
<dbReference type="InterPro" id="IPR045086">
    <property type="entry name" value="OBG_GTPase"/>
</dbReference>
<dbReference type="InterPro" id="IPR027417">
    <property type="entry name" value="P-loop_NTPase"/>
</dbReference>
<dbReference type="NCBIfam" id="TIGR02729">
    <property type="entry name" value="Obg_CgtA"/>
    <property type="match status" value="1"/>
</dbReference>
<dbReference type="NCBIfam" id="NF008955">
    <property type="entry name" value="PRK12297.1"/>
    <property type="match status" value="1"/>
</dbReference>
<dbReference type="NCBIfam" id="NF008956">
    <property type="entry name" value="PRK12299.1"/>
    <property type="match status" value="1"/>
</dbReference>
<dbReference type="PANTHER" id="PTHR11702">
    <property type="entry name" value="DEVELOPMENTALLY REGULATED GTP-BINDING PROTEIN-RELATED"/>
    <property type="match status" value="1"/>
</dbReference>
<dbReference type="PANTHER" id="PTHR11702:SF31">
    <property type="entry name" value="MITOCHONDRIAL RIBOSOME-ASSOCIATED GTPASE 2"/>
    <property type="match status" value="1"/>
</dbReference>
<dbReference type="Pfam" id="PF01018">
    <property type="entry name" value="GTP1_OBG"/>
    <property type="match status" value="1"/>
</dbReference>
<dbReference type="Pfam" id="PF01926">
    <property type="entry name" value="MMR_HSR1"/>
    <property type="match status" value="1"/>
</dbReference>
<dbReference type="PIRSF" id="PIRSF002401">
    <property type="entry name" value="GTP_bd_Obg/CgtA"/>
    <property type="match status" value="1"/>
</dbReference>
<dbReference type="PRINTS" id="PR00326">
    <property type="entry name" value="GTP1OBG"/>
</dbReference>
<dbReference type="SUPFAM" id="SSF82051">
    <property type="entry name" value="Obg GTP-binding protein N-terminal domain"/>
    <property type="match status" value="1"/>
</dbReference>
<dbReference type="SUPFAM" id="SSF52540">
    <property type="entry name" value="P-loop containing nucleoside triphosphate hydrolases"/>
    <property type="match status" value="1"/>
</dbReference>
<dbReference type="PROSITE" id="PS51710">
    <property type="entry name" value="G_OBG"/>
    <property type="match status" value="1"/>
</dbReference>
<dbReference type="PROSITE" id="PS00905">
    <property type="entry name" value="GTP1_OBG"/>
    <property type="match status" value="1"/>
</dbReference>
<dbReference type="PROSITE" id="PS51883">
    <property type="entry name" value="OBG"/>
    <property type="match status" value="1"/>
</dbReference>
<evidence type="ECO:0000255" key="1">
    <source>
        <dbReference type="HAMAP-Rule" id="MF_01454"/>
    </source>
</evidence>
<evidence type="ECO:0000255" key="2">
    <source>
        <dbReference type="PROSITE-ProRule" id="PRU01231"/>
    </source>
</evidence>
<evidence type="ECO:0000256" key="3">
    <source>
        <dbReference type="SAM" id="MobiDB-lite"/>
    </source>
</evidence>
<accession>B4TWF3</accession>
<name>OBG_SALSV</name>
<gene>
    <name evidence="1" type="primary">obg</name>
    <name type="ordered locus">SeSA_A3493</name>
</gene>
<proteinExistence type="inferred from homology"/>
<keyword id="KW-0963">Cytoplasm</keyword>
<keyword id="KW-0342">GTP-binding</keyword>
<keyword id="KW-0378">Hydrolase</keyword>
<keyword id="KW-0460">Magnesium</keyword>
<keyword id="KW-0479">Metal-binding</keyword>
<keyword id="KW-0547">Nucleotide-binding</keyword>
<organism>
    <name type="scientific">Salmonella schwarzengrund (strain CVM19633)</name>
    <dbReference type="NCBI Taxonomy" id="439843"/>
    <lineage>
        <taxon>Bacteria</taxon>
        <taxon>Pseudomonadati</taxon>
        <taxon>Pseudomonadota</taxon>
        <taxon>Gammaproteobacteria</taxon>
        <taxon>Enterobacterales</taxon>
        <taxon>Enterobacteriaceae</taxon>
        <taxon>Salmonella</taxon>
    </lineage>
</organism>
<reference key="1">
    <citation type="journal article" date="2011" name="J. Bacteriol.">
        <title>Comparative genomics of 28 Salmonella enterica isolates: evidence for CRISPR-mediated adaptive sublineage evolution.</title>
        <authorList>
            <person name="Fricke W.F."/>
            <person name="Mammel M.K."/>
            <person name="McDermott P.F."/>
            <person name="Tartera C."/>
            <person name="White D.G."/>
            <person name="Leclerc J.E."/>
            <person name="Ravel J."/>
            <person name="Cebula T.A."/>
        </authorList>
    </citation>
    <scope>NUCLEOTIDE SEQUENCE [LARGE SCALE GENOMIC DNA]</scope>
    <source>
        <strain>CVM19633</strain>
    </source>
</reference>
<comment type="function">
    <text evidence="1">An essential GTPase which binds GTP, GDP and possibly (p)ppGpp with moderate affinity, with high nucleotide exchange rates and a fairly low GTP hydrolysis rate. Plays a role in control of the cell cycle, stress response, ribosome biogenesis and in those bacteria that undergo differentiation, in morphogenesis control.</text>
</comment>
<comment type="cofactor">
    <cofactor evidence="1">
        <name>Mg(2+)</name>
        <dbReference type="ChEBI" id="CHEBI:18420"/>
    </cofactor>
</comment>
<comment type="subunit">
    <text evidence="1">Monomer.</text>
</comment>
<comment type="subcellular location">
    <subcellularLocation>
        <location evidence="1">Cytoplasm</location>
    </subcellularLocation>
</comment>
<comment type="similarity">
    <text evidence="1">Belongs to the TRAFAC class OBG-HflX-like GTPase superfamily. OBG GTPase family.</text>
</comment>
<feature type="chain" id="PRO_0000386231" description="GTPase Obg">
    <location>
        <begin position="1"/>
        <end position="390"/>
    </location>
</feature>
<feature type="domain" description="Obg" evidence="2">
    <location>
        <begin position="1"/>
        <end position="159"/>
    </location>
</feature>
<feature type="domain" description="OBG-type G" evidence="1">
    <location>
        <begin position="160"/>
        <end position="333"/>
    </location>
</feature>
<feature type="region of interest" description="Disordered" evidence="3">
    <location>
        <begin position="127"/>
        <end position="147"/>
    </location>
</feature>
<feature type="compositionally biased region" description="Polar residues" evidence="3">
    <location>
        <begin position="129"/>
        <end position="145"/>
    </location>
</feature>
<feature type="binding site" evidence="1">
    <location>
        <begin position="166"/>
        <end position="173"/>
    </location>
    <ligand>
        <name>GTP</name>
        <dbReference type="ChEBI" id="CHEBI:37565"/>
    </ligand>
</feature>
<feature type="binding site" evidence="1">
    <location>
        <position position="173"/>
    </location>
    <ligand>
        <name>Mg(2+)</name>
        <dbReference type="ChEBI" id="CHEBI:18420"/>
    </ligand>
</feature>
<feature type="binding site" evidence="1">
    <location>
        <begin position="191"/>
        <end position="195"/>
    </location>
    <ligand>
        <name>GTP</name>
        <dbReference type="ChEBI" id="CHEBI:37565"/>
    </ligand>
</feature>
<feature type="binding site" evidence="1">
    <location>
        <position position="193"/>
    </location>
    <ligand>
        <name>Mg(2+)</name>
        <dbReference type="ChEBI" id="CHEBI:18420"/>
    </ligand>
</feature>
<feature type="binding site" evidence="1">
    <location>
        <begin position="213"/>
        <end position="216"/>
    </location>
    <ligand>
        <name>GTP</name>
        <dbReference type="ChEBI" id="CHEBI:37565"/>
    </ligand>
</feature>
<feature type="binding site" evidence="1">
    <location>
        <begin position="283"/>
        <end position="286"/>
    </location>
    <ligand>
        <name>GTP</name>
        <dbReference type="ChEBI" id="CHEBI:37565"/>
    </ligand>
</feature>
<feature type="binding site" evidence="1">
    <location>
        <begin position="314"/>
        <end position="316"/>
    </location>
    <ligand>
        <name>GTP</name>
        <dbReference type="ChEBI" id="CHEBI:37565"/>
    </ligand>
</feature>
<sequence>MKFVDEASILVVAGDGGNGCVSFRREKYIPKGGPDGGDGGDGGDVWMEADENLNTLIDYRFEKSFRAERGQNGASRDCTGKRGKDVTIKVPVGTRVIDQGTGETMGDMTKHGQRLLVAKGGWHGLGNTRFKSSVNRTPRQKTNGTPGDKRDLLLELMLLADVGMLGMPNAGKSTFIRAVSAAKPKVADYPFTTLVPSLGVVRMDSEKSFVVADIPGLIEGAAEGAGLGIRFLKHLERCRVLLHLIDIDPIDGSDPVENARIIIGELEKYSQDLAAKPRWLVFNKIDLMDKTEAEEKAKAIAEALGWEGKYYLISAASQLGVKDLCWDVMTFIIENPIAQAEEAKQPEKVEFMWDDYHRQQLAEVEEDADDDWDDDWDEDDEEGVEFIYKR</sequence>
<protein>
    <recommendedName>
        <fullName evidence="1">GTPase Obg</fullName>
        <ecNumber evidence="1">3.6.5.-</ecNumber>
    </recommendedName>
    <alternativeName>
        <fullName evidence="1">GTP-binding protein Obg</fullName>
    </alternativeName>
</protein>